<name>ZRAR_SALTI</name>
<gene>
    <name type="primary">zraR</name>
    <name type="synonym">hydG</name>
    <name type="ordered locus">STY3711</name>
    <name type="ordered locus">t3457</name>
</gene>
<feature type="chain" id="PRO_0000081282" description="Transcriptional regulatory protein ZraR">
    <location>
        <begin position="1"/>
        <end position="441"/>
    </location>
</feature>
<feature type="domain" description="Response regulatory" evidence="4">
    <location>
        <begin position="7"/>
        <end position="121"/>
    </location>
</feature>
<feature type="domain" description="Sigma-54 factor interaction" evidence="5">
    <location>
        <begin position="141"/>
        <end position="370"/>
    </location>
</feature>
<feature type="DNA-binding region" description="H-T-H motif" evidence="1">
    <location>
        <begin position="421"/>
        <end position="440"/>
    </location>
</feature>
<feature type="binding site" evidence="3">
    <location>
        <position position="172"/>
    </location>
    <ligand>
        <name>ATP</name>
        <dbReference type="ChEBI" id="CHEBI:30616"/>
    </ligand>
</feature>
<feature type="binding site" evidence="3">
    <location>
        <position position="173"/>
    </location>
    <ligand>
        <name>ATP</name>
        <dbReference type="ChEBI" id="CHEBI:30616"/>
    </ligand>
</feature>
<feature type="binding site" evidence="3">
    <location>
        <position position="329"/>
    </location>
    <ligand>
        <name>ATP</name>
        <dbReference type="ChEBI" id="CHEBI:30616"/>
    </ligand>
</feature>
<feature type="binding site" evidence="3">
    <location>
        <position position="359"/>
    </location>
    <ligand>
        <name>ATP</name>
        <dbReference type="ChEBI" id="CHEBI:30616"/>
    </ligand>
</feature>
<feature type="modified residue" description="4-aspartylphosphate" evidence="4">
    <location>
        <position position="56"/>
    </location>
</feature>
<accession>Q8Z333</accession>
<evidence type="ECO:0000250" key="1"/>
<evidence type="ECO:0000250" key="2">
    <source>
        <dbReference type="UniProtKB" id="P14375"/>
    </source>
</evidence>
<evidence type="ECO:0000250" key="3">
    <source>
        <dbReference type="UniProtKB" id="P25852"/>
    </source>
</evidence>
<evidence type="ECO:0000255" key="4">
    <source>
        <dbReference type="PROSITE-ProRule" id="PRU00169"/>
    </source>
</evidence>
<evidence type="ECO:0000255" key="5">
    <source>
        <dbReference type="PROSITE-ProRule" id="PRU00193"/>
    </source>
</evidence>
<dbReference type="EMBL" id="AL513382">
    <property type="protein sequence ID" value="CAD09470.1"/>
    <property type="molecule type" value="Genomic_DNA"/>
</dbReference>
<dbReference type="EMBL" id="AE014613">
    <property type="protein sequence ID" value="AAO70973.1"/>
    <property type="molecule type" value="Genomic_DNA"/>
</dbReference>
<dbReference type="RefSeq" id="NP_457900.1">
    <property type="nucleotide sequence ID" value="NC_003198.1"/>
</dbReference>
<dbReference type="RefSeq" id="WP_000617932.1">
    <property type="nucleotide sequence ID" value="NZ_WSUR01000043.1"/>
</dbReference>
<dbReference type="SMR" id="Q8Z333"/>
<dbReference type="STRING" id="220341.gene:17587571"/>
<dbReference type="KEGG" id="stt:t3457"/>
<dbReference type="KEGG" id="sty:STY3711"/>
<dbReference type="PATRIC" id="fig|220341.7.peg.3783"/>
<dbReference type="eggNOG" id="COG2204">
    <property type="taxonomic scope" value="Bacteria"/>
</dbReference>
<dbReference type="HOGENOM" id="CLU_000445_0_6_6"/>
<dbReference type="OMA" id="RGWGYQV"/>
<dbReference type="OrthoDB" id="9804019at2"/>
<dbReference type="Proteomes" id="UP000000541">
    <property type="component" value="Chromosome"/>
</dbReference>
<dbReference type="Proteomes" id="UP000002670">
    <property type="component" value="Chromosome"/>
</dbReference>
<dbReference type="GO" id="GO:0005737">
    <property type="term" value="C:cytoplasm"/>
    <property type="evidence" value="ECO:0007669"/>
    <property type="project" value="UniProtKB-SubCell"/>
</dbReference>
<dbReference type="GO" id="GO:0005524">
    <property type="term" value="F:ATP binding"/>
    <property type="evidence" value="ECO:0007669"/>
    <property type="project" value="UniProtKB-KW"/>
</dbReference>
<dbReference type="GO" id="GO:0016887">
    <property type="term" value="F:ATP hydrolysis activity"/>
    <property type="evidence" value="ECO:0007669"/>
    <property type="project" value="InterPro"/>
</dbReference>
<dbReference type="GO" id="GO:0043565">
    <property type="term" value="F:sequence-specific DNA binding"/>
    <property type="evidence" value="ECO:0007669"/>
    <property type="project" value="InterPro"/>
</dbReference>
<dbReference type="GO" id="GO:0000160">
    <property type="term" value="P:phosphorelay signal transduction system"/>
    <property type="evidence" value="ECO:0007669"/>
    <property type="project" value="UniProtKB-KW"/>
</dbReference>
<dbReference type="GO" id="GO:0006355">
    <property type="term" value="P:regulation of DNA-templated transcription"/>
    <property type="evidence" value="ECO:0007669"/>
    <property type="project" value="InterPro"/>
</dbReference>
<dbReference type="CDD" id="cd00009">
    <property type="entry name" value="AAA"/>
    <property type="match status" value="1"/>
</dbReference>
<dbReference type="FunFam" id="1.10.8.60:FF:000014">
    <property type="entry name" value="DNA-binding transcriptional regulator NtrC"/>
    <property type="match status" value="1"/>
</dbReference>
<dbReference type="FunFam" id="3.40.50.2300:FF:000018">
    <property type="entry name" value="DNA-binding transcriptional regulator NtrC"/>
    <property type="match status" value="1"/>
</dbReference>
<dbReference type="FunFam" id="3.40.50.300:FF:000006">
    <property type="entry name" value="DNA-binding transcriptional regulator NtrC"/>
    <property type="match status" value="1"/>
</dbReference>
<dbReference type="Gene3D" id="1.10.8.60">
    <property type="match status" value="1"/>
</dbReference>
<dbReference type="Gene3D" id="3.40.50.2300">
    <property type="match status" value="1"/>
</dbReference>
<dbReference type="Gene3D" id="1.10.10.60">
    <property type="entry name" value="Homeodomain-like"/>
    <property type="match status" value="1"/>
</dbReference>
<dbReference type="Gene3D" id="3.40.50.300">
    <property type="entry name" value="P-loop containing nucleotide triphosphate hydrolases"/>
    <property type="match status" value="1"/>
</dbReference>
<dbReference type="InterPro" id="IPR003593">
    <property type="entry name" value="AAA+_ATPase"/>
</dbReference>
<dbReference type="InterPro" id="IPR011006">
    <property type="entry name" value="CheY-like_superfamily"/>
</dbReference>
<dbReference type="InterPro" id="IPR009057">
    <property type="entry name" value="Homeodomain-like_sf"/>
</dbReference>
<dbReference type="InterPro" id="IPR002197">
    <property type="entry name" value="HTH_Fis"/>
</dbReference>
<dbReference type="InterPro" id="IPR027417">
    <property type="entry name" value="P-loop_NTPase"/>
</dbReference>
<dbReference type="InterPro" id="IPR001789">
    <property type="entry name" value="Sig_transdc_resp-reg_receiver"/>
</dbReference>
<dbReference type="InterPro" id="IPR002078">
    <property type="entry name" value="Sigma_54_int"/>
</dbReference>
<dbReference type="InterPro" id="IPR025662">
    <property type="entry name" value="Sigma_54_int_dom_ATP-bd_1"/>
</dbReference>
<dbReference type="InterPro" id="IPR025943">
    <property type="entry name" value="Sigma_54_int_dom_ATP-bd_2"/>
</dbReference>
<dbReference type="InterPro" id="IPR025944">
    <property type="entry name" value="Sigma_54_int_dom_CS"/>
</dbReference>
<dbReference type="NCBIfam" id="NF007689">
    <property type="entry name" value="PRK10365.1"/>
    <property type="match status" value="1"/>
</dbReference>
<dbReference type="PANTHER" id="PTHR32071:SF117">
    <property type="entry name" value="PTS-DEPENDENT DIHYDROXYACETONE KINASE OPERON REGULATORY PROTEIN-RELATED"/>
    <property type="match status" value="1"/>
</dbReference>
<dbReference type="PANTHER" id="PTHR32071">
    <property type="entry name" value="TRANSCRIPTIONAL REGULATORY PROTEIN"/>
    <property type="match status" value="1"/>
</dbReference>
<dbReference type="Pfam" id="PF02954">
    <property type="entry name" value="HTH_8"/>
    <property type="match status" value="1"/>
</dbReference>
<dbReference type="Pfam" id="PF00072">
    <property type="entry name" value="Response_reg"/>
    <property type="match status" value="1"/>
</dbReference>
<dbReference type="Pfam" id="PF00158">
    <property type="entry name" value="Sigma54_activat"/>
    <property type="match status" value="1"/>
</dbReference>
<dbReference type="PRINTS" id="PR01590">
    <property type="entry name" value="HTHFIS"/>
</dbReference>
<dbReference type="SMART" id="SM00382">
    <property type="entry name" value="AAA"/>
    <property type="match status" value="1"/>
</dbReference>
<dbReference type="SMART" id="SM00448">
    <property type="entry name" value="REC"/>
    <property type="match status" value="1"/>
</dbReference>
<dbReference type="SUPFAM" id="SSF52172">
    <property type="entry name" value="CheY-like"/>
    <property type="match status" value="1"/>
</dbReference>
<dbReference type="SUPFAM" id="SSF46689">
    <property type="entry name" value="Homeodomain-like"/>
    <property type="match status" value="1"/>
</dbReference>
<dbReference type="SUPFAM" id="SSF52540">
    <property type="entry name" value="P-loop containing nucleoside triphosphate hydrolases"/>
    <property type="match status" value="1"/>
</dbReference>
<dbReference type="PROSITE" id="PS50110">
    <property type="entry name" value="RESPONSE_REGULATORY"/>
    <property type="match status" value="1"/>
</dbReference>
<dbReference type="PROSITE" id="PS00675">
    <property type="entry name" value="SIGMA54_INTERACT_1"/>
    <property type="match status" value="1"/>
</dbReference>
<dbReference type="PROSITE" id="PS00676">
    <property type="entry name" value="SIGMA54_INTERACT_2"/>
    <property type="match status" value="1"/>
</dbReference>
<dbReference type="PROSITE" id="PS00688">
    <property type="entry name" value="SIGMA54_INTERACT_3"/>
    <property type="match status" value="1"/>
</dbReference>
<dbReference type="PROSITE" id="PS50045">
    <property type="entry name" value="SIGMA54_INTERACT_4"/>
    <property type="match status" value="1"/>
</dbReference>
<proteinExistence type="inferred from homology"/>
<reference key="1">
    <citation type="journal article" date="2001" name="Nature">
        <title>Complete genome sequence of a multiple drug resistant Salmonella enterica serovar Typhi CT18.</title>
        <authorList>
            <person name="Parkhill J."/>
            <person name="Dougan G."/>
            <person name="James K.D."/>
            <person name="Thomson N.R."/>
            <person name="Pickard D."/>
            <person name="Wain J."/>
            <person name="Churcher C.M."/>
            <person name="Mungall K.L."/>
            <person name="Bentley S.D."/>
            <person name="Holden M.T.G."/>
            <person name="Sebaihia M."/>
            <person name="Baker S."/>
            <person name="Basham D."/>
            <person name="Brooks K."/>
            <person name="Chillingworth T."/>
            <person name="Connerton P."/>
            <person name="Cronin A."/>
            <person name="Davis P."/>
            <person name="Davies R.M."/>
            <person name="Dowd L."/>
            <person name="White N."/>
            <person name="Farrar J."/>
            <person name="Feltwell T."/>
            <person name="Hamlin N."/>
            <person name="Haque A."/>
            <person name="Hien T.T."/>
            <person name="Holroyd S."/>
            <person name="Jagels K."/>
            <person name="Krogh A."/>
            <person name="Larsen T.S."/>
            <person name="Leather S."/>
            <person name="Moule S."/>
            <person name="O'Gaora P."/>
            <person name="Parry C."/>
            <person name="Quail M.A."/>
            <person name="Rutherford K.M."/>
            <person name="Simmonds M."/>
            <person name="Skelton J."/>
            <person name="Stevens K."/>
            <person name="Whitehead S."/>
            <person name="Barrell B.G."/>
        </authorList>
    </citation>
    <scope>NUCLEOTIDE SEQUENCE [LARGE SCALE GENOMIC DNA]</scope>
    <source>
        <strain>CT18</strain>
    </source>
</reference>
<reference key="2">
    <citation type="journal article" date="2003" name="J. Bacteriol.">
        <title>Comparative genomics of Salmonella enterica serovar Typhi strains Ty2 and CT18.</title>
        <authorList>
            <person name="Deng W."/>
            <person name="Liou S.-R."/>
            <person name="Plunkett G. III"/>
            <person name="Mayhew G.F."/>
            <person name="Rose D.J."/>
            <person name="Burland V."/>
            <person name="Kodoyianni V."/>
            <person name="Schwartz D.C."/>
            <person name="Blattner F.R."/>
        </authorList>
    </citation>
    <scope>NUCLEOTIDE SEQUENCE [LARGE SCALE GENOMIC DNA]</scope>
    <source>
        <strain>ATCC 700931 / Ty2</strain>
    </source>
</reference>
<protein>
    <recommendedName>
        <fullName>Transcriptional regulatory protein ZraR</fullName>
    </recommendedName>
</protein>
<organism>
    <name type="scientific">Salmonella typhi</name>
    <dbReference type="NCBI Taxonomy" id="90370"/>
    <lineage>
        <taxon>Bacteria</taxon>
        <taxon>Pseudomonadati</taxon>
        <taxon>Pseudomonadota</taxon>
        <taxon>Gammaproteobacteria</taxon>
        <taxon>Enterobacterales</taxon>
        <taxon>Enterobacteriaceae</taxon>
        <taxon>Salmonella</taxon>
    </lineage>
</organism>
<keyword id="KW-0010">Activator</keyword>
<keyword id="KW-0067">ATP-binding</keyword>
<keyword id="KW-0963">Cytoplasm</keyword>
<keyword id="KW-0238">DNA-binding</keyword>
<keyword id="KW-0547">Nucleotide-binding</keyword>
<keyword id="KW-0597">Phosphoprotein</keyword>
<keyword id="KW-0346">Stress response</keyword>
<keyword id="KW-0804">Transcription</keyword>
<keyword id="KW-0805">Transcription regulation</keyword>
<keyword id="KW-0902">Two-component regulatory system</keyword>
<sequence>MIRGKIDILVVDDDVSHCTILQALLRGWGYNVALAYSGHDALAQVREKVFDLVLCDVRMAEMDGIATLKEIKALNPAIPILIMTAFSSVETAVEALKAGALDYLIKPLDFDRLQETLEKALAHTRETGAELPSASAAQFGMIGSSPAMQHLLNEIAMVAPSDATVLIHGDSGTGKELVARALHACSARSDKPLVTLNCAALNESLLESELFGHEKGAFTGADKRREGRFVEADGGTLFLDEIGDISPLMQVRLLRAIQEREVQRVGSNQTISVDVWLIAATHRDLAEEVSAGRFRQDLYYRLNVVAIEMPSLRQRREDIPLLADHFLRRFAERNRKAVKGFTPQAMDLLIHYDWPGNIRELENAIERAVVLLTGEYISERELPLAIAATPIKAENSAEIQPLVDVEKEVILAALEKTGGNKTEAARQLGITRKTLLAKLSR</sequence>
<comment type="function">
    <text evidence="2">Part of the Zra signaling pathway, an envelope stress response (ESR) system composed of the periplasmic accessory protein ZraP, the histidine kinase ZraS and the transcriptional regulator ZraR. The ZraPSR system contributes to antibiotic resistance and is important for membrane integrity in the presence of membrane-targeting biocides. ZraR is a member of the two-component regulatory system ZraS/ZraR. When activated by ZraS, acts in conjunction with sigma-54 to regulate the expression of zraP in the presence of high Zn(2+) or Pb(2+) concentrations. Also positively autoregulates the expression of the zraSR operon.</text>
</comment>
<comment type="activity regulation">
    <text evidence="2">Activity of the ZraS/ZraR two-component system is repressed by the zinc-bound form of ZraP, which probably interacts with the periplasmic region of ZraS.</text>
</comment>
<comment type="subcellular location">
    <subcellularLocation>
        <location evidence="2">Cytoplasm</location>
    </subcellularLocation>
</comment>
<comment type="PTM">
    <text evidence="2">Phosphorylated by ZraS.</text>
</comment>